<reference key="1">
    <citation type="journal article" date="1995" name="Plant Mol. Biol. Rep.">
        <title>Complete nucleotide sequence of the Porphyra purpurea chloroplast genome.</title>
        <authorList>
            <person name="Reith M.E."/>
            <person name="Munholland J."/>
        </authorList>
    </citation>
    <scope>NUCLEOTIDE SEQUENCE [LARGE SCALE GENOMIC DNA]</scope>
    <source>
        <strain>Avonport</strain>
    </source>
</reference>
<evidence type="ECO:0000255" key="1">
    <source>
        <dbReference type="HAMAP-Rule" id="MF_01416"/>
    </source>
</evidence>
<keyword id="KW-0066">ATP synthesis</keyword>
<keyword id="KW-0139">CF(1)</keyword>
<keyword id="KW-0150">Chloroplast</keyword>
<keyword id="KW-0375">Hydrogen ion transport</keyword>
<keyword id="KW-0406">Ion transport</keyword>
<keyword id="KW-0472">Membrane</keyword>
<keyword id="KW-0934">Plastid</keyword>
<keyword id="KW-0793">Thylakoid</keyword>
<keyword id="KW-0813">Transport</keyword>
<name>ATPD_PORPU</name>
<geneLocation type="chloroplast"/>
<comment type="function">
    <text evidence="1">F(1)F(0) ATP synthase produces ATP from ADP in the presence of a proton or sodium gradient. F-type ATPases consist of two structural domains, F(1) containing the extramembraneous catalytic core and F(0) containing the membrane proton channel, linked together by a central stalk and a peripheral stalk. During catalysis, ATP synthesis in the catalytic domain of F(1) is coupled via a rotary mechanism of the central stalk subunits to proton translocation.</text>
</comment>
<comment type="function">
    <text evidence="1">This protein is part of the stalk that links CF(0) to CF(1). It either transmits conformational changes from CF(0) to CF(1) or is implicated in proton conduction.</text>
</comment>
<comment type="subunit">
    <text evidence="1">F-type ATPases have 2 components, F(1) - the catalytic core - and F(0) - the membrane proton channel. F(1) has five subunits: alpha(3), beta(3), gamma(1), delta(1), epsilon(1). CF(0) has four main subunits: a(1), b(1), b'(1) and c(10-14). The alpha and beta chains form an alternating ring which encloses part of the gamma chain. F(1) is attached to F(0) by a central stalk formed by the gamma and epsilon chains, while a peripheral stalk is formed by the delta, b and b' chains.</text>
</comment>
<comment type="subcellular location">
    <subcellularLocation>
        <location evidence="1">Plastid</location>
        <location evidence="1">Chloroplast thylakoid membrane</location>
        <topology evidence="1">Peripheral membrane protein</topology>
    </subcellularLocation>
</comment>
<comment type="similarity">
    <text evidence="1">Belongs to the ATPase delta chain family.</text>
</comment>
<protein>
    <recommendedName>
        <fullName evidence="1">ATP synthase subunit delta, chloroplastic</fullName>
    </recommendedName>
    <alternativeName>
        <fullName evidence="1">ATP synthase F(1) sector subunit delta</fullName>
    </alternativeName>
    <alternativeName>
        <fullName evidence="1">F-type ATPase subunit delta</fullName>
    </alternativeName>
</protein>
<organism>
    <name type="scientific">Porphyra purpurea</name>
    <name type="common">Red seaweed</name>
    <name type="synonym">Ulva purpurea</name>
    <dbReference type="NCBI Taxonomy" id="2787"/>
    <lineage>
        <taxon>Eukaryota</taxon>
        <taxon>Rhodophyta</taxon>
        <taxon>Bangiophyceae</taxon>
        <taxon>Bangiales</taxon>
        <taxon>Bangiaceae</taxon>
        <taxon>Porphyra</taxon>
    </lineage>
</organism>
<dbReference type="EMBL" id="U38804">
    <property type="protein sequence ID" value="AAC08129.1"/>
    <property type="molecule type" value="Genomic_DNA"/>
</dbReference>
<dbReference type="PIR" id="S73164">
    <property type="entry name" value="S73164"/>
</dbReference>
<dbReference type="RefSeq" id="NP_053853.1">
    <property type="nucleotide sequence ID" value="NC_000925.1"/>
</dbReference>
<dbReference type="SMR" id="P51243"/>
<dbReference type="GeneID" id="809872"/>
<dbReference type="GO" id="GO:0009535">
    <property type="term" value="C:chloroplast thylakoid membrane"/>
    <property type="evidence" value="ECO:0007669"/>
    <property type="project" value="UniProtKB-SubCell"/>
</dbReference>
<dbReference type="GO" id="GO:0045259">
    <property type="term" value="C:proton-transporting ATP synthase complex"/>
    <property type="evidence" value="ECO:0007669"/>
    <property type="project" value="UniProtKB-KW"/>
</dbReference>
<dbReference type="GO" id="GO:0046933">
    <property type="term" value="F:proton-transporting ATP synthase activity, rotational mechanism"/>
    <property type="evidence" value="ECO:0007669"/>
    <property type="project" value="UniProtKB-UniRule"/>
</dbReference>
<dbReference type="Gene3D" id="1.10.520.20">
    <property type="entry name" value="N-terminal domain of the delta subunit of the F1F0-ATP synthase"/>
    <property type="match status" value="1"/>
</dbReference>
<dbReference type="HAMAP" id="MF_01416">
    <property type="entry name" value="ATP_synth_delta_bact"/>
    <property type="match status" value="1"/>
</dbReference>
<dbReference type="InterPro" id="IPR026015">
    <property type="entry name" value="ATP_synth_OSCP/delta_N_sf"/>
</dbReference>
<dbReference type="InterPro" id="IPR020781">
    <property type="entry name" value="ATPase_OSCP/d_CS"/>
</dbReference>
<dbReference type="InterPro" id="IPR000711">
    <property type="entry name" value="ATPase_OSCP/dsu"/>
</dbReference>
<dbReference type="NCBIfam" id="TIGR01145">
    <property type="entry name" value="ATP_synt_delta"/>
    <property type="match status" value="1"/>
</dbReference>
<dbReference type="PANTHER" id="PTHR11910">
    <property type="entry name" value="ATP SYNTHASE DELTA CHAIN"/>
    <property type="match status" value="1"/>
</dbReference>
<dbReference type="Pfam" id="PF00213">
    <property type="entry name" value="OSCP"/>
    <property type="match status" value="1"/>
</dbReference>
<dbReference type="PRINTS" id="PR00125">
    <property type="entry name" value="ATPASEDELTA"/>
</dbReference>
<dbReference type="SUPFAM" id="SSF47928">
    <property type="entry name" value="N-terminal domain of the delta subunit of the F1F0-ATP synthase"/>
    <property type="match status" value="1"/>
</dbReference>
<dbReference type="PROSITE" id="PS00389">
    <property type="entry name" value="ATPASE_DELTA"/>
    <property type="match status" value="1"/>
</dbReference>
<accession>P51243</accession>
<sequence length="186" mass="20329">MSSNNLVAKIAQPYASALLDLANEKKAIEQISQDMKLIKDILLQSGKLKYFLANPLKTIEAKKQVIAATFGDQISENTLSFLMVLVDRKRISMLDVIAGKYLELAYAMESLTIANISTSIALNSDQENLLIDKIKAMTSAKEVKLVISVDPELIGGFTIQIGSKVIDTSIRGQLKQMASHLDVAAM</sequence>
<feature type="chain" id="PRO_0000193505" description="ATP synthase subunit delta, chloroplastic">
    <location>
        <begin position="1"/>
        <end position="186"/>
    </location>
</feature>
<gene>
    <name evidence="1" type="primary">atpD</name>
</gene>
<proteinExistence type="inferred from homology"/>